<keyword id="KW-0133">Cell shape</keyword>
<keyword id="KW-0961">Cell wall biogenesis/degradation</keyword>
<keyword id="KW-0413">Isomerase</keyword>
<keyword id="KW-0573">Peptidoglycan synthesis</keyword>
<keyword id="KW-1185">Reference proteome</keyword>
<gene>
    <name evidence="1" type="primary">murI</name>
    <name type="ordered locus">CT0284</name>
</gene>
<proteinExistence type="inferred from homology"/>
<sequence length="272" mass="29225">MPQHKVSSDSPIGIFDSGIGGLTVVKAVQAALPSERIIYFGDTARVPYGSKSQVTIRKYAREDTELLMKHQPKLIIVACNTVSALALDVVEQTAGGIPVIGVLKAGAELAVQKTKSGRIGVIGTQATIGSNAYTCAIREEKETLEVFPKACPLFVPLAEEGFIDHPATRLVAEEYLAAFTGKEIDTLVLGCTHYPILRKIIESITGPEITIIDSAEAVASKAGELLAARGLLNQSPEKALPHLMVSDLPQKFRELYRLFMGTELPDVELVGM</sequence>
<comment type="function">
    <text evidence="1">Provides the (R)-glutamate required for cell wall biosynthesis.</text>
</comment>
<comment type="catalytic activity">
    <reaction evidence="1">
        <text>L-glutamate = D-glutamate</text>
        <dbReference type="Rhea" id="RHEA:12813"/>
        <dbReference type="ChEBI" id="CHEBI:29985"/>
        <dbReference type="ChEBI" id="CHEBI:29986"/>
        <dbReference type="EC" id="5.1.1.3"/>
    </reaction>
</comment>
<comment type="pathway">
    <text evidence="1">Cell wall biogenesis; peptidoglycan biosynthesis.</text>
</comment>
<comment type="similarity">
    <text evidence="1">Belongs to the aspartate/glutamate racemases family.</text>
</comment>
<feature type="chain" id="PRO_0000095464" description="Glutamate racemase">
    <location>
        <begin position="1"/>
        <end position="272"/>
    </location>
</feature>
<feature type="active site" description="Proton donor/acceptor" evidence="1">
    <location>
        <position position="79"/>
    </location>
</feature>
<feature type="active site" description="Proton donor/acceptor" evidence="1">
    <location>
        <position position="191"/>
    </location>
</feature>
<feature type="binding site" evidence="1">
    <location>
        <begin position="16"/>
        <end position="17"/>
    </location>
    <ligand>
        <name>substrate</name>
    </ligand>
</feature>
<feature type="binding site" evidence="1">
    <location>
        <begin position="48"/>
        <end position="49"/>
    </location>
    <ligand>
        <name>substrate</name>
    </ligand>
</feature>
<feature type="binding site" evidence="1">
    <location>
        <begin position="80"/>
        <end position="81"/>
    </location>
    <ligand>
        <name>substrate</name>
    </ligand>
</feature>
<feature type="binding site" evidence="1">
    <location>
        <begin position="192"/>
        <end position="193"/>
    </location>
    <ligand>
        <name>substrate</name>
    </ligand>
</feature>
<reference key="1">
    <citation type="journal article" date="2002" name="Proc. Natl. Acad. Sci. U.S.A.">
        <title>The complete genome sequence of Chlorobium tepidum TLS, a photosynthetic, anaerobic, green-sulfur bacterium.</title>
        <authorList>
            <person name="Eisen J.A."/>
            <person name="Nelson K.E."/>
            <person name="Paulsen I.T."/>
            <person name="Heidelberg J.F."/>
            <person name="Wu M."/>
            <person name="Dodson R.J."/>
            <person name="DeBoy R.T."/>
            <person name="Gwinn M.L."/>
            <person name="Nelson W.C."/>
            <person name="Haft D.H."/>
            <person name="Hickey E.K."/>
            <person name="Peterson J.D."/>
            <person name="Durkin A.S."/>
            <person name="Kolonay J.F."/>
            <person name="Yang F."/>
            <person name="Holt I.E."/>
            <person name="Umayam L.A."/>
            <person name="Mason T.M."/>
            <person name="Brenner M."/>
            <person name="Shea T.P."/>
            <person name="Parksey D.S."/>
            <person name="Nierman W.C."/>
            <person name="Feldblyum T.V."/>
            <person name="Hansen C.L."/>
            <person name="Craven M.B."/>
            <person name="Radune D."/>
            <person name="Vamathevan J.J."/>
            <person name="Khouri H.M."/>
            <person name="White O."/>
            <person name="Gruber T.M."/>
            <person name="Ketchum K.A."/>
            <person name="Venter J.C."/>
            <person name="Tettelin H."/>
            <person name="Bryant D.A."/>
            <person name="Fraser C.M."/>
        </authorList>
    </citation>
    <scope>NUCLEOTIDE SEQUENCE [LARGE SCALE GENOMIC DNA]</scope>
    <source>
        <strain>ATCC 49652 / DSM 12025 / NBRC 103806 / TLS</strain>
    </source>
</reference>
<organism>
    <name type="scientific">Chlorobaculum tepidum (strain ATCC 49652 / DSM 12025 / NBRC 103806 / TLS)</name>
    <name type="common">Chlorobium tepidum</name>
    <dbReference type="NCBI Taxonomy" id="194439"/>
    <lineage>
        <taxon>Bacteria</taxon>
        <taxon>Pseudomonadati</taxon>
        <taxon>Chlorobiota</taxon>
        <taxon>Chlorobiia</taxon>
        <taxon>Chlorobiales</taxon>
        <taxon>Chlorobiaceae</taxon>
        <taxon>Chlorobaculum</taxon>
    </lineage>
</organism>
<protein>
    <recommendedName>
        <fullName evidence="1">Glutamate racemase</fullName>
        <ecNumber evidence="1">5.1.1.3</ecNumber>
    </recommendedName>
</protein>
<evidence type="ECO:0000255" key="1">
    <source>
        <dbReference type="HAMAP-Rule" id="MF_00258"/>
    </source>
</evidence>
<name>MURI_CHLTE</name>
<accession>Q8KFN8</accession>
<dbReference type="EC" id="5.1.1.3" evidence="1"/>
<dbReference type="EMBL" id="AE006470">
    <property type="protein sequence ID" value="AAM71530.1"/>
    <property type="molecule type" value="Genomic_DNA"/>
</dbReference>
<dbReference type="RefSeq" id="NP_661188.1">
    <property type="nucleotide sequence ID" value="NC_002932.3"/>
</dbReference>
<dbReference type="RefSeq" id="WP_010931976.1">
    <property type="nucleotide sequence ID" value="NC_002932.3"/>
</dbReference>
<dbReference type="SMR" id="Q8KFN8"/>
<dbReference type="STRING" id="194439.CT0284"/>
<dbReference type="EnsemblBacteria" id="AAM71530">
    <property type="protein sequence ID" value="AAM71530"/>
    <property type="gene ID" value="CT0284"/>
</dbReference>
<dbReference type="KEGG" id="cte:CT0284"/>
<dbReference type="PATRIC" id="fig|194439.7.peg.276"/>
<dbReference type="eggNOG" id="COG0796">
    <property type="taxonomic scope" value="Bacteria"/>
</dbReference>
<dbReference type="HOGENOM" id="CLU_052344_0_2_10"/>
<dbReference type="OrthoDB" id="9801055at2"/>
<dbReference type="UniPathway" id="UPA00219"/>
<dbReference type="Proteomes" id="UP000001007">
    <property type="component" value="Chromosome"/>
</dbReference>
<dbReference type="GO" id="GO:0008881">
    <property type="term" value="F:glutamate racemase activity"/>
    <property type="evidence" value="ECO:0007669"/>
    <property type="project" value="UniProtKB-UniRule"/>
</dbReference>
<dbReference type="GO" id="GO:0071555">
    <property type="term" value="P:cell wall organization"/>
    <property type="evidence" value="ECO:0007669"/>
    <property type="project" value="UniProtKB-KW"/>
</dbReference>
<dbReference type="GO" id="GO:0009252">
    <property type="term" value="P:peptidoglycan biosynthetic process"/>
    <property type="evidence" value="ECO:0007669"/>
    <property type="project" value="UniProtKB-UniRule"/>
</dbReference>
<dbReference type="GO" id="GO:0008360">
    <property type="term" value="P:regulation of cell shape"/>
    <property type="evidence" value="ECO:0007669"/>
    <property type="project" value="UniProtKB-KW"/>
</dbReference>
<dbReference type="FunFam" id="3.40.50.1860:FF:000001">
    <property type="entry name" value="Glutamate racemase"/>
    <property type="match status" value="1"/>
</dbReference>
<dbReference type="Gene3D" id="3.40.50.1860">
    <property type="match status" value="2"/>
</dbReference>
<dbReference type="HAMAP" id="MF_00258">
    <property type="entry name" value="Glu_racemase"/>
    <property type="match status" value="1"/>
</dbReference>
<dbReference type="InterPro" id="IPR015942">
    <property type="entry name" value="Asp/Glu/hydantoin_racemase"/>
</dbReference>
<dbReference type="InterPro" id="IPR001920">
    <property type="entry name" value="Asp/Glu_race"/>
</dbReference>
<dbReference type="InterPro" id="IPR033134">
    <property type="entry name" value="Asp/Glu_racemase_AS_2"/>
</dbReference>
<dbReference type="InterPro" id="IPR004391">
    <property type="entry name" value="Glu_race"/>
</dbReference>
<dbReference type="NCBIfam" id="TIGR00067">
    <property type="entry name" value="glut_race"/>
    <property type="match status" value="1"/>
</dbReference>
<dbReference type="PANTHER" id="PTHR21198">
    <property type="entry name" value="GLUTAMATE RACEMASE"/>
    <property type="match status" value="1"/>
</dbReference>
<dbReference type="PANTHER" id="PTHR21198:SF2">
    <property type="entry name" value="GLUTAMATE RACEMASE"/>
    <property type="match status" value="1"/>
</dbReference>
<dbReference type="Pfam" id="PF01177">
    <property type="entry name" value="Asp_Glu_race"/>
    <property type="match status" value="1"/>
</dbReference>
<dbReference type="SUPFAM" id="SSF53681">
    <property type="entry name" value="Aspartate/glutamate racemase"/>
    <property type="match status" value="2"/>
</dbReference>
<dbReference type="PROSITE" id="PS00924">
    <property type="entry name" value="ASP_GLU_RACEMASE_2"/>
    <property type="match status" value="1"/>
</dbReference>